<feature type="signal peptide" evidence="2">
    <location>
        <begin position="1"/>
        <end position="24"/>
    </location>
</feature>
<feature type="chain" id="PRO_0000032056" description="Glutelin type-B 1 acidic chain" evidence="1">
    <location>
        <begin position="25"/>
        <end position="302"/>
    </location>
</feature>
<feature type="chain" id="PRO_0000032057" description="Glutelin type-B 1 basic chain" evidence="1">
    <location>
        <begin position="303"/>
        <end position="499"/>
    </location>
</feature>
<feature type="domain" description="Cupin type-1 1" evidence="2">
    <location>
        <begin position="50"/>
        <end position="247"/>
    </location>
</feature>
<feature type="domain" description="Cupin type-1 2" evidence="2">
    <location>
        <begin position="315"/>
        <end position="464"/>
    </location>
</feature>
<feature type="region of interest" description="Disordered" evidence="3">
    <location>
        <begin position="467"/>
        <end position="499"/>
    </location>
</feature>
<feature type="disulfide bond" evidence="1">
    <location>
        <begin position="45"/>
        <end position="78"/>
    </location>
</feature>
<feature type="disulfide bond" description="Interchain (between acidic and basic chains)" evidence="2">
    <location>
        <begin position="121"/>
        <end position="309"/>
    </location>
</feature>
<feature type="sequence conflict" description="In Ref. 1; CAA32706 and 3; CAA38212." evidence="4" ref="1 3">
    <original>AP</original>
    <variation>RH</variation>
    <location>
        <begin position="175"/>
        <end position="176"/>
    </location>
</feature>
<feature type="sequence conflict" description="In Ref. 1; CAA32706 and 3; CAA38212." evidence="4" ref="1 3">
    <original>Q</original>
    <variation>P</variation>
    <location>
        <position position="252"/>
    </location>
</feature>
<feature type="sequence conflict" description="In Ref. 2; CAA33838." evidence="4" ref="2">
    <original>G</original>
    <variation>A</variation>
    <location>
        <position position="401"/>
    </location>
</feature>
<feature type="sequence conflict" description="In Ref. 1; CAA32706 and 3; CAA38212." evidence="4" ref="1 3">
    <original>A</original>
    <variation>T</variation>
    <location>
        <position position="432"/>
    </location>
</feature>
<proteinExistence type="evidence at transcript level"/>
<gene>
    <name type="primary">GluB1-A</name>
    <name type="synonym">GluB-1</name>
    <name evidence="9" type="ordered locus">Os02g0249800</name>
    <name evidence="4" type="ordered locus">LOC_Os02g15169</name>
    <name evidence="6" type="ORF">OJ1113_G05.6</name>
    <name evidence="8" type="ORF">OSJNBa0011N12.36</name>
</gene>
<gene>
    <name type="primary">GLUB1-B</name>
    <name type="synonym">GLUB-1</name>
    <name evidence="10" type="ordered locus">Os02g0249900</name>
    <name evidence="4" type="ordered locus">LOC_Os02g15178</name>
    <name evidence="5" type="ORF">OJ1113_G05.4</name>
    <name evidence="7" type="ORF">OSJNBa0011N12.34</name>
</gene>
<dbReference type="EMBL" id="X14568">
    <property type="protein sequence ID" value="CAA32706.1"/>
    <property type="molecule type" value="mRNA"/>
</dbReference>
<dbReference type="EMBL" id="X15833">
    <property type="protein sequence ID" value="CAA33838.1"/>
    <property type="molecule type" value="mRNA"/>
</dbReference>
<dbReference type="EMBL" id="X54314">
    <property type="protein sequence ID" value="CAA38212.1"/>
    <property type="molecule type" value="Genomic_DNA"/>
</dbReference>
<dbReference type="EMBL" id="AP004018">
    <property type="protein sequence ID" value="BAD19150.1"/>
    <property type="molecule type" value="Genomic_DNA"/>
</dbReference>
<dbReference type="EMBL" id="AP004018">
    <property type="protein sequence ID" value="BAD19149.1"/>
    <property type="molecule type" value="Genomic_DNA"/>
</dbReference>
<dbReference type="EMBL" id="AP005511">
    <property type="protein sequence ID" value="BAD19803.1"/>
    <property type="molecule type" value="Genomic_DNA"/>
</dbReference>
<dbReference type="EMBL" id="AP005511">
    <property type="protein sequence ID" value="BAD19802.1"/>
    <property type="molecule type" value="Genomic_DNA"/>
</dbReference>
<dbReference type="EMBL" id="AP014958">
    <property type="protein sequence ID" value="BAS77905.1"/>
    <property type="molecule type" value="Genomic_DNA"/>
</dbReference>
<dbReference type="EMBL" id="AP014958">
    <property type="protein sequence ID" value="BAS77906.1"/>
    <property type="molecule type" value="Genomic_DNA"/>
</dbReference>
<dbReference type="PIR" id="S07640">
    <property type="entry name" value="S07640"/>
</dbReference>
<dbReference type="PIR" id="S17762">
    <property type="entry name" value="S17762"/>
</dbReference>
<dbReference type="SMR" id="P14323"/>
<dbReference type="FunCoup" id="P14323">
    <property type="interactions" value="2006"/>
</dbReference>
<dbReference type="IntAct" id="P14323">
    <property type="interactions" value="2"/>
</dbReference>
<dbReference type="STRING" id="39947.P14323"/>
<dbReference type="PaxDb" id="39947-P14323"/>
<dbReference type="EnsemblPlants" id="Os02t0249800-01">
    <property type="protein sequence ID" value="Os02t0249800-01"/>
    <property type="gene ID" value="Os02g0249800"/>
</dbReference>
<dbReference type="EnsemblPlants" id="Os02t0249900-01">
    <property type="protein sequence ID" value="Os02t0249900-01"/>
    <property type="gene ID" value="Os02g0249900"/>
</dbReference>
<dbReference type="GeneID" id="4328883"/>
<dbReference type="GeneID" id="4328884"/>
<dbReference type="Gramene" id="Os02t0249800-01">
    <property type="protein sequence ID" value="Os02t0249800-01"/>
    <property type="gene ID" value="Os02g0249800"/>
</dbReference>
<dbReference type="Gramene" id="Os02t0249900-01">
    <property type="protein sequence ID" value="Os02t0249900-01"/>
    <property type="gene ID" value="Os02g0249900"/>
</dbReference>
<dbReference type="KEGG" id="osa:4328883"/>
<dbReference type="KEGG" id="osa:4328884"/>
<dbReference type="eggNOG" id="ENOG502QU1J">
    <property type="taxonomic scope" value="Eukaryota"/>
</dbReference>
<dbReference type="HOGENOM" id="CLU_026341_2_0_1"/>
<dbReference type="InParanoid" id="P14323"/>
<dbReference type="OMA" id="QAKHYQG"/>
<dbReference type="OrthoDB" id="2016041at2759"/>
<dbReference type="Proteomes" id="UP000000763">
    <property type="component" value="Chromosome 2"/>
</dbReference>
<dbReference type="Proteomes" id="UP000059680">
    <property type="component" value="Chromosome 2"/>
</dbReference>
<dbReference type="ExpressionAtlas" id="P14323">
    <property type="expression patterns" value="baseline and differential"/>
</dbReference>
<dbReference type="GO" id="GO:0045735">
    <property type="term" value="F:nutrient reservoir activity"/>
    <property type="evidence" value="ECO:0007669"/>
    <property type="project" value="UniProtKB-KW"/>
</dbReference>
<dbReference type="GO" id="GO:0048316">
    <property type="term" value="P:seed development"/>
    <property type="evidence" value="ECO:0007669"/>
    <property type="project" value="UniProtKB-ARBA"/>
</dbReference>
<dbReference type="CDD" id="cd02243">
    <property type="entry name" value="cupin_11S_legumin_C"/>
    <property type="match status" value="1"/>
</dbReference>
<dbReference type="CDD" id="cd02242">
    <property type="entry name" value="cupin_11S_legumin_N"/>
    <property type="match status" value="1"/>
</dbReference>
<dbReference type="FunFam" id="2.60.120.10:FF:000073">
    <property type="entry name" value="Glycinin G1"/>
    <property type="match status" value="1"/>
</dbReference>
<dbReference type="Gene3D" id="2.60.120.10">
    <property type="entry name" value="Jelly Rolls"/>
    <property type="match status" value="2"/>
</dbReference>
<dbReference type="InterPro" id="IPR022379">
    <property type="entry name" value="11S_seedstore_CS"/>
</dbReference>
<dbReference type="InterPro" id="IPR006044">
    <property type="entry name" value="11S_seedstore_pln"/>
</dbReference>
<dbReference type="InterPro" id="IPR006045">
    <property type="entry name" value="Cupin_1"/>
</dbReference>
<dbReference type="InterPro" id="IPR014710">
    <property type="entry name" value="RmlC-like_jellyroll"/>
</dbReference>
<dbReference type="InterPro" id="IPR011051">
    <property type="entry name" value="RmlC_Cupin_sf"/>
</dbReference>
<dbReference type="InterPro" id="IPR050253">
    <property type="entry name" value="Seed_Storage-Functional"/>
</dbReference>
<dbReference type="PANTHER" id="PTHR31189:SF35">
    <property type="entry name" value="12S SEED STORAGE PROTEIN CRB"/>
    <property type="match status" value="1"/>
</dbReference>
<dbReference type="PANTHER" id="PTHR31189">
    <property type="entry name" value="OS03G0336100 PROTEIN-RELATED"/>
    <property type="match status" value="1"/>
</dbReference>
<dbReference type="Pfam" id="PF00190">
    <property type="entry name" value="Cupin_1"/>
    <property type="match status" value="2"/>
</dbReference>
<dbReference type="PRINTS" id="PR00439">
    <property type="entry name" value="11SGLOBULIN"/>
</dbReference>
<dbReference type="SMART" id="SM00835">
    <property type="entry name" value="Cupin_1"/>
    <property type="match status" value="2"/>
</dbReference>
<dbReference type="SUPFAM" id="SSF51182">
    <property type="entry name" value="RmlC-like cupins"/>
    <property type="match status" value="1"/>
</dbReference>
<dbReference type="PROSITE" id="PS00305">
    <property type="entry name" value="11S_SEED_STORAGE"/>
    <property type="match status" value="1"/>
</dbReference>
<comment type="function">
    <text>Seed storage protein.</text>
</comment>
<comment type="subunit">
    <text>Hexamer; each subunit is composed of an acidic and a basic chain derived from a single precursor and linked by a disulfide bond.</text>
</comment>
<comment type="developmental stage">
    <text>It begins to accumulate 6 days after flowering and reaches a maximum level at 14 days.</text>
</comment>
<comment type="similarity">
    <text evidence="4">Belongs to the 11S seed storage protein (globulins) family.</text>
</comment>
<name>GLUB1_ORYSJ</name>
<sequence>MASSVFSRFSIYFCVLLLCHGSMAQLFNPSTNPWHSPRQGSFRECRFDRLQAFEPLRKVRSEAGVTEYFDEKNELFQCTGTFVIRRVIQPQGLLVPRYTNIPGVVYIIQGRGSMGLTFPGCPATYQQQFQQFSSQGQSQSQKFRDEHQKIHQFRQGDIVALPAGVAHWFYNDGDAPIVAVYVYDVNNNANQLEPRQKEFLLAGNNNRAQQQQVYGSSIEQHSGQNIFSGFGVEMLSEALGINAVAAKRLQSQNDQRGEIIHVKNGLQLLKPTLTQQQEQAQAQDQYQQVQYSERQQTSSRWNGLEENFCTIKVRVNIENPSRADSYNPRAGRITSVNSQKFPILNLIQMSATRVNLYQNAILSPFWNVNAHSLVYMIQGRSRVQVVSNFGKTVFDGVLRPGQLLIIPQHYAVLKKAEREGCQYIAIKTNANAFVSHLAGKNSVFRALPVDVVANAYRISREQARSLKNNRGEEHGAFTPRFQQQYYPGLSNESESETSE</sequence>
<evidence type="ECO:0000250" key="1"/>
<evidence type="ECO:0000255" key="2"/>
<evidence type="ECO:0000256" key="3">
    <source>
        <dbReference type="SAM" id="MobiDB-lite"/>
    </source>
</evidence>
<evidence type="ECO:0000305" key="4"/>
<evidence type="ECO:0000312" key="5">
    <source>
        <dbReference type="EMBL" id="BAD19149.1"/>
    </source>
</evidence>
<evidence type="ECO:0000312" key="6">
    <source>
        <dbReference type="EMBL" id="BAD19150.1"/>
    </source>
</evidence>
<evidence type="ECO:0000312" key="7">
    <source>
        <dbReference type="EMBL" id="BAD19802.1"/>
    </source>
</evidence>
<evidence type="ECO:0000312" key="8">
    <source>
        <dbReference type="EMBL" id="BAD19803.1"/>
    </source>
</evidence>
<evidence type="ECO:0000312" key="9">
    <source>
        <dbReference type="EMBL" id="BAS77905.1"/>
    </source>
</evidence>
<evidence type="ECO:0000312" key="10">
    <source>
        <dbReference type="EMBL" id="BAS77906.1"/>
    </source>
</evidence>
<organism>
    <name type="scientific">Oryza sativa subsp. japonica</name>
    <name type="common">Rice</name>
    <dbReference type="NCBI Taxonomy" id="39947"/>
    <lineage>
        <taxon>Eukaryota</taxon>
        <taxon>Viridiplantae</taxon>
        <taxon>Streptophyta</taxon>
        <taxon>Embryophyta</taxon>
        <taxon>Tracheophyta</taxon>
        <taxon>Spermatophyta</taxon>
        <taxon>Magnoliopsida</taxon>
        <taxon>Liliopsida</taxon>
        <taxon>Poales</taxon>
        <taxon>Poaceae</taxon>
        <taxon>BOP clade</taxon>
        <taxon>Oryzoideae</taxon>
        <taxon>Oryzeae</taxon>
        <taxon>Oryzinae</taxon>
        <taxon>Oryza</taxon>
        <taxon>Oryza sativa</taxon>
    </lineage>
</organism>
<accession>P14323</accession>
<accession>Q02898</accession>
<accession>Q6KA41</accession>
<protein>
    <recommendedName>
        <fullName>Glutelin type-B 1</fullName>
    </recommendedName>
    <component>
        <recommendedName>
            <fullName>Glutelin type-B 1 acidic chain</fullName>
        </recommendedName>
    </component>
    <component>
        <recommendedName>
            <fullName>Glutelin type-B 1 basic chain</fullName>
        </recommendedName>
    </component>
</protein>
<reference key="1">
    <citation type="journal article" date="1989" name="Nucleic Acids Res.">
        <title>The complete nucleotide sequence of new type cDNA coding for rice storage protein glutelin.</title>
        <authorList>
            <person name="Takaiwa F."/>
            <person name="Kikuchi S."/>
            <person name="Oono K."/>
        </authorList>
    </citation>
    <scope>NUCLEOTIDE SEQUENCE [MRNA]</scope>
    <source>
        <strain>cv. Mangetsumochi</strain>
        <tissue>Seed</tissue>
    </source>
</reference>
<reference key="2">
    <citation type="journal article" date="1989" name="Nucleic Acids Res.">
        <title>Nucleotide sequence of a cDNA that encodes a rice glutelin.</title>
        <authorList>
            <person name="Wen L."/>
            <person name="Huang J.K."/>
            <person name="Johnson B.H."/>
            <person name="Reeck G.R."/>
        </authorList>
    </citation>
    <scope>NUCLEOTIDE SEQUENCE [MRNA]</scope>
</reference>
<reference key="3">
    <citation type="journal article" date="1991" name="Plant Mol. Biol.">
        <title>Sequence of three members and expression of a new major subfamily of glutelin genes from rice.</title>
        <authorList>
            <person name="Takaiwa F."/>
            <person name="Oono K."/>
            <person name="Wing D."/>
            <person name="Kato A."/>
        </authorList>
    </citation>
    <scope>NUCLEOTIDE SEQUENCE [GENOMIC DNA]</scope>
    <source>
        <strain>cv. Mangetsumochi</strain>
        <tissue>Seed</tissue>
    </source>
</reference>
<reference key="4">
    <citation type="journal article" date="2005" name="Nature">
        <title>The map-based sequence of the rice genome.</title>
        <authorList>
            <consortium name="International rice genome sequencing project (IRGSP)"/>
        </authorList>
    </citation>
    <scope>NUCLEOTIDE SEQUENCE [LARGE SCALE GENOMIC DNA]</scope>
    <source>
        <strain>cv. Nipponbare</strain>
    </source>
</reference>
<reference key="5">
    <citation type="journal article" date="2013" name="Rice">
        <title>Improvement of the Oryza sativa Nipponbare reference genome using next generation sequence and optical map data.</title>
        <authorList>
            <person name="Kawahara Y."/>
            <person name="de la Bastide M."/>
            <person name="Hamilton J.P."/>
            <person name="Kanamori H."/>
            <person name="McCombie W.R."/>
            <person name="Ouyang S."/>
            <person name="Schwartz D.C."/>
            <person name="Tanaka T."/>
            <person name="Wu J."/>
            <person name="Zhou S."/>
            <person name="Childs K.L."/>
            <person name="Davidson R.M."/>
            <person name="Lin H."/>
            <person name="Quesada-Ocampo L."/>
            <person name="Vaillancourt B."/>
            <person name="Sakai H."/>
            <person name="Lee S.S."/>
            <person name="Kim J."/>
            <person name="Numa H."/>
            <person name="Itoh T."/>
            <person name="Buell C.R."/>
            <person name="Matsumoto T."/>
        </authorList>
    </citation>
    <scope>GENOME REANNOTATION</scope>
    <source>
        <strain>cv. Nipponbare</strain>
    </source>
</reference>
<keyword id="KW-1015">Disulfide bond</keyword>
<keyword id="KW-1185">Reference proteome</keyword>
<keyword id="KW-0708">Seed storage protein</keyword>
<keyword id="KW-0732">Signal</keyword>
<keyword id="KW-0758">Storage protein</keyword>